<protein>
    <recommendedName>
        <fullName>POM121 and ZP3 fusion protein</fullName>
        <shortName>POM-ZP3</shortName>
    </recommendedName>
</protein>
<comment type="alternative products">
    <event type="alternative splicing"/>
    <isoform>
        <id>Q6PJE2-4</id>
        <name>1</name>
        <sequence type="displayed"/>
    </isoform>
    <isoform>
        <id>Q6PJE2-5</id>
        <name>2</name>
        <sequence type="described" ref="VSP_046257"/>
    </isoform>
</comment>
<comment type="tissue specificity">
    <text evidence="2">Expressed in spleen, thymus, pancreas, testis, ovary, small intestine, colon and lymphocytes.</text>
</comment>
<comment type="caution">
    <text evidence="3">The POM-ZP3 transcript appears to have arisen from a partial duplication and fusion of a 5' portion of a POM121 homolog and exons 5-8 of ZP3.</text>
</comment>
<comment type="sequence caution" evidence="3">
    <conflict type="frameshift">
        <sequence resource="EMBL-CDS" id="AAA85788"/>
    </conflict>
</comment>
<gene>
    <name type="primary">POMZP3</name>
</gene>
<accession>Q6PJE2</accession>
<accession>F6STJ3</accession>
<accession>Q12903</accession>
<accession>Q9BWB4</accession>
<sequence length="187" mass="20620">MVCSPVTLRIAPPDRRFSRSAIPEQIISSTLSSPSSNAPDPCAKETVLSALKEKKKKRTVEEEDQIFLDGQENKRSCLVDGLTDASSAFKVPRPGPDTLQFTVDVFHFANDSRNMIYITCHLKVTLAEQDPDELNKACSFSKPSNSWFPVEGLADICQCCNKGDCGTPSHSRRQPRVVSQWSTSASL</sequence>
<dbReference type="EMBL" id="U10099">
    <property type="protein sequence ID" value="AAA85788.1"/>
    <property type="status" value="ALT_FRAME"/>
    <property type="molecule type" value="mRNA"/>
</dbReference>
<dbReference type="EMBL" id="AC004980">
    <property type="status" value="NOT_ANNOTATED_CDS"/>
    <property type="molecule type" value="Genomic_DNA"/>
</dbReference>
<dbReference type="CCDS" id="CCDS43606.1">
    <molecule id="Q6PJE2-4"/>
</dbReference>
<dbReference type="CCDS" id="CCDS5590.1">
    <molecule id="Q6PJE2-5"/>
</dbReference>
<dbReference type="PIR" id="A56844">
    <property type="entry name" value="A56844"/>
</dbReference>
<dbReference type="PIR" id="B44365">
    <property type="entry name" value="B44365"/>
</dbReference>
<dbReference type="RefSeq" id="NP_036362.3">
    <molecule id="Q6PJE2-4"/>
    <property type="nucleotide sequence ID" value="NM_012230.3"/>
</dbReference>
<dbReference type="RefSeq" id="NP_694537.1">
    <molecule id="Q6PJE2-5"/>
    <property type="nucleotide sequence ID" value="NM_152992.4"/>
</dbReference>
<dbReference type="SMR" id="Q6PJE2"/>
<dbReference type="BioGRID" id="116592">
    <property type="interactions" value="10"/>
</dbReference>
<dbReference type="FunCoup" id="Q6PJE2">
    <property type="interactions" value="6"/>
</dbReference>
<dbReference type="IntAct" id="Q6PJE2">
    <property type="interactions" value="5"/>
</dbReference>
<dbReference type="MINT" id="Q6PJE2"/>
<dbReference type="STRING" id="9606.ENSP00000309233"/>
<dbReference type="GlyGen" id="Q6PJE2">
    <property type="glycosylation" value="1 site"/>
</dbReference>
<dbReference type="iPTMnet" id="Q6PJE2"/>
<dbReference type="PhosphoSitePlus" id="Q6PJE2"/>
<dbReference type="BioMuta" id="POMZP3"/>
<dbReference type="jPOST" id="Q6PJE2"/>
<dbReference type="MassIVE" id="Q6PJE2"/>
<dbReference type="PaxDb" id="9606-ENSP00000309233"/>
<dbReference type="PeptideAtlas" id="Q6PJE2"/>
<dbReference type="ProteomicsDB" id="27940"/>
<dbReference type="ProteomicsDB" id="67198">
    <molecule id="Q6PJE2-4"/>
</dbReference>
<dbReference type="Antibodypedia" id="29359">
    <property type="antibodies" value="101 antibodies from 16 providers"/>
</dbReference>
<dbReference type="DNASU" id="22932"/>
<dbReference type="Ensembl" id="ENST00000275569.8">
    <molecule id="Q6PJE2-5"/>
    <property type="protein sequence ID" value="ENSP00000275569.4"/>
    <property type="gene ID" value="ENSG00000146707.15"/>
</dbReference>
<dbReference type="Ensembl" id="ENST00000310842.9">
    <molecule id="Q6PJE2-4"/>
    <property type="protein sequence ID" value="ENSP00000309233.4"/>
    <property type="gene ID" value="ENSG00000146707.15"/>
</dbReference>
<dbReference type="Ensembl" id="ENST00000615241.2">
    <molecule id="Q6PJE2-5"/>
    <property type="protein sequence ID" value="ENSP00000484663.1"/>
    <property type="gene ID" value="ENSG00000276464.4"/>
</dbReference>
<dbReference type="Ensembl" id="ENST00000619075.4">
    <molecule id="Q6PJE2-4"/>
    <property type="protein sequence ID" value="ENSP00000477906.1"/>
    <property type="gene ID" value="ENSG00000276464.4"/>
</dbReference>
<dbReference type="GeneID" id="22932"/>
<dbReference type="KEGG" id="hsa:22932"/>
<dbReference type="MANE-Select" id="ENST00000310842.9">
    <property type="protein sequence ID" value="ENSP00000309233.4"/>
    <property type="RefSeq nucleotide sequence ID" value="NM_012230.5"/>
    <property type="RefSeq protein sequence ID" value="NP_036362.3"/>
</dbReference>
<dbReference type="UCSC" id="uc003uft.4">
    <molecule id="Q6PJE2-4"/>
    <property type="organism name" value="human"/>
</dbReference>
<dbReference type="AGR" id="HGNC:9203"/>
<dbReference type="CTD" id="22932"/>
<dbReference type="GeneCards" id="POMZP3"/>
<dbReference type="HGNC" id="HGNC:9203">
    <property type="gene designation" value="POMZP3"/>
</dbReference>
<dbReference type="HPA" id="ENSG00000146707">
    <property type="expression patterns" value="Low tissue specificity"/>
</dbReference>
<dbReference type="MIM" id="600587">
    <property type="type" value="gene"/>
</dbReference>
<dbReference type="neXtProt" id="NX_Q6PJE2"/>
<dbReference type="OpenTargets" id="ENSG00000146707"/>
<dbReference type="VEuPathDB" id="HostDB:ENSG00000146707"/>
<dbReference type="eggNOG" id="ENOG502QSZF">
    <property type="taxonomic scope" value="Eukaryota"/>
</dbReference>
<dbReference type="GeneTree" id="ENSGT01030000234567"/>
<dbReference type="HOGENOM" id="CLU_2108194_0_0_1"/>
<dbReference type="InParanoid" id="Q6PJE2"/>
<dbReference type="OrthoDB" id="8880842at2759"/>
<dbReference type="PAN-GO" id="Q6PJE2">
    <property type="GO annotations" value="5 GO annotations based on evolutionary models"/>
</dbReference>
<dbReference type="PhylomeDB" id="Q6PJE2"/>
<dbReference type="PathwayCommons" id="Q6PJE2"/>
<dbReference type="SignaLink" id="Q6PJE2"/>
<dbReference type="BioGRID-ORCS" id="22932">
    <property type="hits" value="29 hits in 1081 CRISPR screens"/>
</dbReference>
<dbReference type="ChiTaRS" id="POMZP3">
    <property type="organism name" value="human"/>
</dbReference>
<dbReference type="GenomeRNAi" id="22932"/>
<dbReference type="Pharos" id="Q6PJE2">
    <property type="development level" value="Tdark"/>
</dbReference>
<dbReference type="PRO" id="PR:Q6PJE2"/>
<dbReference type="Proteomes" id="UP000005640">
    <property type="component" value="Chromosome 7"/>
</dbReference>
<dbReference type="RNAct" id="Q6PJE2">
    <property type="molecule type" value="protein"/>
</dbReference>
<dbReference type="Bgee" id="ENSG00000146707">
    <property type="expression patterns" value="Expressed in left testis and 98 other cell types or tissues"/>
</dbReference>
<dbReference type="ExpressionAtlas" id="Q6PJE2">
    <property type="expression patterns" value="baseline and differential"/>
</dbReference>
<dbReference type="GO" id="GO:0031965">
    <property type="term" value="C:nuclear membrane"/>
    <property type="evidence" value="ECO:0000314"/>
    <property type="project" value="HPA"/>
</dbReference>
<dbReference type="GO" id="GO:0005654">
    <property type="term" value="C:nucleoplasm"/>
    <property type="evidence" value="ECO:0000314"/>
    <property type="project" value="HPA"/>
</dbReference>
<dbReference type="FunFam" id="2.60.40.4100:FF:000002">
    <property type="entry name" value="Zona pellucida sperm-binding protein 3"/>
    <property type="match status" value="1"/>
</dbReference>
<dbReference type="Gene3D" id="2.60.40.4100">
    <property type="entry name" value="Zona pellucida, ZP-C domain"/>
    <property type="match status" value="1"/>
</dbReference>
<dbReference type="InterPro" id="IPR055355">
    <property type="entry name" value="ZP-C"/>
</dbReference>
<dbReference type="InterPro" id="IPR042235">
    <property type="entry name" value="ZP-C_dom"/>
</dbReference>
<dbReference type="PANTHER" id="PTHR11576">
    <property type="entry name" value="ZONA PELLUCIDA SPERM-BINDING PROTEIN 3"/>
    <property type="match status" value="1"/>
</dbReference>
<dbReference type="PANTHER" id="PTHR11576:SF2">
    <property type="entry name" value="ZONA PELLUCIDA SPERM-BINDING PROTEIN 3"/>
    <property type="match status" value="1"/>
</dbReference>
<dbReference type="Pfam" id="PF00100">
    <property type="entry name" value="Zona_pellucida"/>
    <property type="match status" value="1"/>
</dbReference>
<keyword id="KW-0025">Alternative splicing</keyword>
<keyword id="KW-1185">Reference proteome</keyword>
<name>POZP3_HUMAN</name>
<feature type="chain" id="PRO_0000204909" description="POM121 and ZP3 fusion protein">
    <location>
        <begin position="1"/>
        <end position="187"/>
    </location>
</feature>
<feature type="region of interest" description="Disordered" evidence="1">
    <location>
        <begin position="166"/>
        <end position="187"/>
    </location>
</feature>
<feature type="compositionally biased region" description="Polar residues" evidence="1">
    <location>
        <begin position="177"/>
        <end position="187"/>
    </location>
</feature>
<feature type="splice variant" id="VSP_046257" description="In isoform 2." evidence="3">
    <location>
        <begin position="116"/>
        <end position="187"/>
    </location>
</feature>
<feature type="sequence variant" id="VAR_056721" description="In dbSNP:rs1065538.">
    <original>R</original>
    <variation>H</variation>
    <location>
        <position position="176"/>
    </location>
</feature>
<organism>
    <name type="scientific">Homo sapiens</name>
    <name type="common">Human</name>
    <dbReference type="NCBI Taxonomy" id="9606"/>
    <lineage>
        <taxon>Eukaryota</taxon>
        <taxon>Metazoa</taxon>
        <taxon>Chordata</taxon>
        <taxon>Craniata</taxon>
        <taxon>Vertebrata</taxon>
        <taxon>Euteleostomi</taxon>
        <taxon>Mammalia</taxon>
        <taxon>Eutheria</taxon>
        <taxon>Euarchontoglires</taxon>
        <taxon>Primates</taxon>
        <taxon>Haplorrhini</taxon>
        <taxon>Catarrhini</taxon>
        <taxon>Hominidae</taxon>
        <taxon>Homo</taxon>
    </lineage>
</organism>
<evidence type="ECO:0000256" key="1">
    <source>
        <dbReference type="SAM" id="MobiDB-lite"/>
    </source>
</evidence>
<evidence type="ECO:0000269" key="2">
    <source>
    </source>
</evidence>
<evidence type="ECO:0000305" key="3"/>
<proteinExistence type="evidence at transcript level"/>
<reference key="1">
    <citation type="journal article" date="1995" name="Genomics">
        <title>POM-ZP3, a bipartite transcript derived from human ZP3 and a POM121 homologue.</title>
        <authorList>
            <person name="Kipersztok S."/>
            <person name="Osawa G.A."/>
            <person name="Liang L.-F."/>
            <person name="Modi W.S."/>
            <person name="Dean J."/>
        </authorList>
    </citation>
    <scope>NUCLEOTIDE SEQUENCE [MRNA] (ISOFORM 1)</scope>
    <scope>TISSUE SPECIFICITY</scope>
    <source>
        <tissue>Ovary</tissue>
    </source>
</reference>
<reference key="2">
    <citation type="journal article" date="2003" name="Nature">
        <title>The DNA sequence of human chromosome 7.</title>
        <authorList>
            <person name="Hillier L.W."/>
            <person name="Fulton R.S."/>
            <person name="Fulton L.A."/>
            <person name="Graves T.A."/>
            <person name="Pepin K.H."/>
            <person name="Wagner-McPherson C."/>
            <person name="Layman D."/>
            <person name="Maas J."/>
            <person name="Jaeger S."/>
            <person name="Walker R."/>
            <person name="Wylie K."/>
            <person name="Sekhon M."/>
            <person name="Becker M.C."/>
            <person name="O'Laughlin M.D."/>
            <person name="Schaller M.E."/>
            <person name="Fewell G.A."/>
            <person name="Delehaunty K.D."/>
            <person name="Miner T.L."/>
            <person name="Nash W.E."/>
            <person name="Cordes M."/>
            <person name="Du H."/>
            <person name="Sun H."/>
            <person name="Edwards J."/>
            <person name="Bradshaw-Cordum H."/>
            <person name="Ali J."/>
            <person name="Andrews S."/>
            <person name="Isak A."/>
            <person name="Vanbrunt A."/>
            <person name="Nguyen C."/>
            <person name="Du F."/>
            <person name="Lamar B."/>
            <person name="Courtney L."/>
            <person name="Kalicki J."/>
            <person name="Ozersky P."/>
            <person name="Bielicki L."/>
            <person name="Scott K."/>
            <person name="Holmes A."/>
            <person name="Harkins R."/>
            <person name="Harris A."/>
            <person name="Strong C.M."/>
            <person name="Hou S."/>
            <person name="Tomlinson C."/>
            <person name="Dauphin-Kohlberg S."/>
            <person name="Kozlowicz-Reilly A."/>
            <person name="Leonard S."/>
            <person name="Rohlfing T."/>
            <person name="Rock S.M."/>
            <person name="Tin-Wollam A.-M."/>
            <person name="Abbott A."/>
            <person name="Minx P."/>
            <person name="Maupin R."/>
            <person name="Strowmatt C."/>
            <person name="Latreille P."/>
            <person name="Miller N."/>
            <person name="Johnson D."/>
            <person name="Murray J."/>
            <person name="Woessner J.P."/>
            <person name="Wendl M.C."/>
            <person name="Yang S.-P."/>
            <person name="Schultz B.R."/>
            <person name="Wallis J.W."/>
            <person name="Spieth J."/>
            <person name="Bieri T.A."/>
            <person name="Nelson J.O."/>
            <person name="Berkowicz N."/>
            <person name="Wohldmann P.E."/>
            <person name="Cook L.L."/>
            <person name="Hickenbotham M.T."/>
            <person name="Eldred J."/>
            <person name="Williams D."/>
            <person name="Bedell J.A."/>
            <person name="Mardis E.R."/>
            <person name="Clifton S.W."/>
            <person name="Chissoe S.L."/>
            <person name="Marra M.A."/>
            <person name="Raymond C."/>
            <person name="Haugen E."/>
            <person name="Gillett W."/>
            <person name="Zhou Y."/>
            <person name="James R."/>
            <person name="Phelps K."/>
            <person name="Iadanoto S."/>
            <person name="Bubb K."/>
            <person name="Simms E."/>
            <person name="Levy R."/>
            <person name="Clendenning J."/>
            <person name="Kaul R."/>
            <person name="Kent W.J."/>
            <person name="Furey T.S."/>
            <person name="Baertsch R.A."/>
            <person name="Brent M.R."/>
            <person name="Keibler E."/>
            <person name="Flicek P."/>
            <person name="Bork P."/>
            <person name="Suyama M."/>
            <person name="Bailey J.A."/>
            <person name="Portnoy M.E."/>
            <person name="Torrents D."/>
            <person name="Chinwalla A.T."/>
            <person name="Gish W.R."/>
            <person name="Eddy S.R."/>
            <person name="McPherson J.D."/>
            <person name="Olson M.V."/>
            <person name="Eichler E.E."/>
            <person name="Green E.D."/>
            <person name="Waterston R.H."/>
            <person name="Wilson R.K."/>
        </authorList>
    </citation>
    <scope>NUCLEOTIDE SEQUENCE [LARGE SCALE GENOMIC DNA]</scope>
</reference>